<reference key="1">
    <citation type="submission" date="2009-04" db="EMBL/GenBank/DDBJ databases">
        <title>Genome sequence of Bacillus anthracis A0248.</title>
        <authorList>
            <person name="Dodson R.J."/>
            <person name="Munk A.C."/>
            <person name="Bruce D."/>
            <person name="Detter C."/>
            <person name="Tapia R."/>
            <person name="Sutton G."/>
            <person name="Sims D."/>
            <person name="Brettin T."/>
        </authorList>
    </citation>
    <scope>NUCLEOTIDE SEQUENCE [LARGE SCALE GENOMIC DNA]</scope>
    <source>
        <strain>A0248</strain>
    </source>
</reference>
<name>ENGB_BACAA</name>
<evidence type="ECO:0000255" key="1">
    <source>
        <dbReference type="HAMAP-Rule" id="MF_00321"/>
    </source>
</evidence>
<proteinExistence type="inferred from homology"/>
<protein>
    <recommendedName>
        <fullName evidence="1">Probable GTP-binding protein EngB</fullName>
    </recommendedName>
</protein>
<gene>
    <name evidence="1" type="primary">engB</name>
    <name type="ordered locus">BAA_4719</name>
</gene>
<keyword id="KW-0131">Cell cycle</keyword>
<keyword id="KW-0132">Cell division</keyword>
<keyword id="KW-0342">GTP-binding</keyword>
<keyword id="KW-0460">Magnesium</keyword>
<keyword id="KW-0479">Metal-binding</keyword>
<keyword id="KW-0547">Nucleotide-binding</keyword>
<keyword id="KW-0717">Septation</keyword>
<organism>
    <name type="scientific">Bacillus anthracis (strain A0248)</name>
    <dbReference type="NCBI Taxonomy" id="592021"/>
    <lineage>
        <taxon>Bacteria</taxon>
        <taxon>Bacillati</taxon>
        <taxon>Bacillota</taxon>
        <taxon>Bacilli</taxon>
        <taxon>Bacillales</taxon>
        <taxon>Bacillaceae</taxon>
        <taxon>Bacillus</taxon>
        <taxon>Bacillus cereus group</taxon>
    </lineage>
</organism>
<accession>C3P9F4</accession>
<feature type="chain" id="PRO_1000133043" description="Probable GTP-binding protein EngB">
    <location>
        <begin position="1"/>
        <end position="198"/>
    </location>
</feature>
<feature type="domain" description="EngB-type G" evidence="1">
    <location>
        <begin position="22"/>
        <end position="195"/>
    </location>
</feature>
<feature type="binding site" evidence="1">
    <location>
        <begin position="30"/>
        <end position="37"/>
    </location>
    <ligand>
        <name>GTP</name>
        <dbReference type="ChEBI" id="CHEBI:37565"/>
    </ligand>
</feature>
<feature type="binding site" evidence="1">
    <location>
        <position position="37"/>
    </location>
    <ligand>
        <name>Mg(2+)</name>
        <dbReference type="ChEBI" id="CHEBI:18420"/>
    </ligand>
</feature>
<feature type="binding site" evidence="1">
    <location>
        <begin position="57"/>
        <end position="61"/>
    </location>
    <ligand>
        <name>GTP</name>
        <dbReference type="ChEBI" id="CHEBI:37565"/>
    </ligand>
</feature>
<feature type="binding site" evidence="1">
    <location>
        <position position="59"/>
    </location>
    <ligand>
        <name>Mg(2+)</name>
        <dbReference type="ChEBI" id="CHEBI:18420"/>
    </ligand>
</feature>
<feature type="binding site" evidence="1">
    <location>
        <begin position="75"/>
        <end position="78"/>
    </location>
    <ligand>
        <name>GTP</name>
        <dbReference type="ChEBI" id="CHEBI:37565"/>
    </ligand>
</feature>
<feature type="binding site" evidence="1">
    <location>
        <begin position="142"/>
        <end position="145"/>
    </location>
    <ligand>
        <name>GTP</name>
        <dbReference type="ChEBI" id="CHEBI:37565"/>
    </ligand>
</feature>
<feature type="binding site" evidence="1">
    <location>
        <begin position="174"/>
        <end position="176"/>
    </location>
    <ligand>
        <name>GTP</name>
        <dbReference type="ChEBI" id="CHEBI:37565"/>
    </ligand>
</feature>
<dbReference type="EMBL" id="CP001598">
    <property type="protein sequence ID" value="ACQ47227.1"/>
    <property type="molecule type" value="Genomic_DNA"/>
</dbReference>
<dbReference type="SMR" id="C3P9F4"/>
<dbReference type="KEGG" id="bai:BAA_4719"/>
<dbReference type="HOGENOM" id="CLU_033732_3_0_9"/>
<dbReference type="GO" id="GO:0005829">
    <property type="term" value="C:cytosol"/>
    <property type="evidence" value="ECO:0007669"/>
    <property type="project" value="TreeGrafter"/>
</dbReference>
<dbReference type="GO" id="GO:0005525">
    <property type="term" value="F:GTP binding"/>
    <property type="evidence" value="ECO:0007669"/>
    <property type="project" value="UniProtKB-UniRule"/>
</dbReference>
<dbReference type="GO" id="GO:0046872">
    <property type="term" value="F:metal ion binding"/>
    <property type="evidence" value="ECO:0007669"/>
    <property type="project" value="UniProtKB-KW"/>
</dbReference>
<dbReference type="GO" id="GO:0000917">
    <property type="term" value="P:division septum assembly"/>
    <property type="evidence" value="ECO:0007669"/>
    <property type="project" value="UniProtKB-KW"/>
</dbReference>
<dbReference type="CDD" id="cd01876">
    <property type="entry name" value="YihA_EngB"/>
    <property type="match status" value="1"/>
</dbReference>
<dbReference type="FunFam" id="3.40.50.300:FF:000098">
    <property type="entry name" value="Probable GTP-binding protein EngB"/>
    <property type="match status" value="1"/>
</dbReference>
<dbReference type="Gene3D" id="3.40.50.300">
    <property type="entry name" value="P-loop containing nucleotide triphosphate hydrolases"/>
    <property type="match status" value="1"/>
</dbReference>
<dbReference type="HAMAP" id="MF_00321">
    <property type="entry name" value="GTPase_EngB"/>
    <property type="match status" value="1"/>
</dbReference>
<dbReference type="InterPro" id="IPR030393">
    <property type="entry name" value="G_ENGB_dom"/>
</dbReference>
<dbReference type="InterPro" id="IPR006073">
    <property type="entry name" value="GTP-bd"/>
</dbReference>
<dbReference type="InterPro" id="IPR019987">
    <property type="entry name" value="GTP-bd_ribosome_bio_YsxC"/>
</dbReference>
<dbReference type="InterPro" id="IPR027417">
    <property type="entry name" value="P-loop_NTPase"/>
</dbReference>
<dbReference type="InterPro" id="IPR005225">
    <property type="entry name" value="Small_GTP-bd"/>
</dbReference>
<dbReference type="NCBIfam" id="TIGR03598">
    <property type="entry name" value="GTPase_YsxC"/>
    <property type="match status" value="1"/>
</dbReference>
<dbReference type="NCBIfam" id="TIGR00231">
    <property type="entry name" value="small_GTP"/>
    <property type="match status" value="1"/>
</dbReference>
<dbReference type="PANTHER" id="PTHR11649:SF13">
    <property type="entry name" value="ENGB-TYPE G DOMAIN-CONTAINING PROTEIN"/>
    <property type="match status" value="1"/>
</dbReference>
<dbReference type="PANTHER" id="PTHR11649">
    <property type="entry name" value="MSS1/TRME-RELATED GTP-BINDING PROTEIN"/>
    <property type="match status" value="1"/>
</dbReference>
<dbReference type="Pfam" id="PF01926">
    <property type="entry name" value="MMR_HSR1"/>
    <property type="match status" value="1"/>
</dbReference>
<dbReference type="SUPFAM" id="SSF52540">
    <property type="entry name" value="P-loop containing nucleoside triphosphate hydrolases"/>
    <property type="match status" value="1"/>
</dbReference>
<dbReference type="PROSITE" id="PS51706">
    <property type="entry name" value="G_ENGB"/>
    <property type="match status" value="1"/>
</dbReference>
<comment type="function">
    <text evidence="1">Necessary for normal cell division and for the maintenance of normal septation.</text>
</comment>
<comment type="cofactor">
    <cofactor evidence="1">
        <name>Mg(2+)</name>
        <dbReference type="ChEBI" id="CHEBI:18420"/>
    </cofactor>
</comment>
<comment type="similarity">
    <text evidence="1">Belongs to the TRAFAC class TrmE-Era-EngA-EngB-Septin-like GTPase superfamily. EngB GTPase family.</text>
</comment>
<sequence length="198" mass="22386">MKVTKADIVISAVKPEQYPDGDLPEIALAGRSNVGKSSFINKILNRKKLVRISSKPGKTQTLNFFLINEMMHFVDVPGYGYAKVSKTERAAWGKMIETYFTTREQLDAAVLVVDLRHKPTNDDVMMYDFLKHYDIPTIIIATKADKIPKGKWQKHLKVVKETLDIESGDEVVLFSSETGLGKEEAWKAIHKFTKTKNA</sequence>